<name>YJDM_SHIFL</name>
<accession>P0AFJ4</accession>
<accession>P16680</accession>
<dbReference type="EMBL" id="AE005674">
    <property type="protein sequence ID" value="AAN45540.1"/>
    <property type="molecule type" value="Genomic_DNA"/>
</dbReference>
<dbReference type="EMBL" id="AE014073">
    <property type="protein sequence ID" value="AAP18659.1"/>
    <property type="molecule type" value="Genomic_DNA"/>
</dbReference>
<dbReference type="RefSeq" id="NP_709833.1">
    <property type="nucleotide sequence ID" value="NC_004337.2"/>
</dbReference>
<dbReference type="RefSeq" id="WP_001300891.1">
    <property type="nucleotide sequence ID" value="NZ_WPGW01000049.1"/>
</dbReference>
<dbReference type="SMR" id="P0AFJ4"/>
<dbReference type="STRING" id="198214.SF4115"/>
<dbReference type="PaxDb" id="198214-SF4115"/>
<dbReference type="GeneID" id="1026584"/>
<dbReference type="KEGG" id="sfl:SF4115"/>
<dbReference type="KEGG" id="sfx:S3615"/>
<dbReference type="PATRIC" id="fig|198214.7.peg.4850"/>
<dbReference type="HOGENOM" id="CLU_134486_0_1_6"/>
<dbReference type="Proteomes" id="UP000001006">
    <property type="component" value="Chromosome"/>
</dbReference>
<dbReference type="Proteomes" id="UP000002673">
    <property type="component" value="Chromosome"/>
</dbReference>
<dbReference type="FunFam" id="2.20.25.10:FF:000003">
    <property type="entry name" value="Alkylphosphonate utilization protein PhnA"/>
    <property type="match status" value="1"/>
</dbReference>
<dbReference type="FunFam" id="2.30.30.40:FF:000013">
    <property type="entry name" value="Alkylphosphonate utilization protein PhnA"/>
    <property type="match status" value="1"/>
</dbReference>
<dbReference type="Gene3D" id="2.20.25.10">
    <property type="match status" value="1"/>
</dbReference>
<dbReference type="Gene3D" id="2.30.30.40">
    <property type="entry name" value="SH3 Domains"/>
    <property type="match status" value="1"/>
</dbReference>
<dbReference type="InterPro" id="IPR004624">
    <property type="entry name" value="YjdM"/>
</dbReference>
<dbReference type="InterPro" id="IPR013988">
    <property type="entry name" value="YjdM_C"/>
</dbReference>
<dbReference type="InterPro" id="IPR013987">
    <property type="entry name" value="YjdM_N"/>
</dbReference>
<dbReference type="NCBIfam" id="TIGR00686">
    <property type="entry name" value="phnA"/>
    <property type="match status" value="1"/>
</dbReference>
<dbReference type="PANTHER" id="PTHR30305:SF3">
    <property type="entry name" value="PROTEIN YJDM"/>
    <property type="match status" value="1"/>
</dbReference>
<dbReference type="PANTHER" id="PTHR30305">
    <property type="entry name" value="PROTEIN YJDM-RELATED"/>
    <property type="match status" value="1"/>
</dbReference>
<dbReference type="Pfam" id="PF03831">
    <property type="entry name" value="YjdM"/>
    <property type="match status" value="1"/>
</dbReference>
<dbReference type="Pfam" id="PF08274">
    <property type="entry name" value="Zn_Ribbon_YjdM"/>
    <property type="match status" value="1"/>
</dbReference>
<dbReference type="SUPFAM" id="SSF82057">
    <property type="entry name" value="Prokaryotic SH3-related domain"/>
    <property type="match status" value="1"/>
</dbReference>
<dbReference type="SUPFAM" id="SSF57783">
    <property type="entry name" value="Zinc beta-ribbon"/>
    <property type="match status" value="1"/>
</dbReference>
<keyword id="KW-1185">Reference proteome</keyword>
<gene>
    <name type="primary">yjdM</name>
    <name type="synonym">phnA</name>
    <name type="ordered locus">SF4115</name>
    <name type="ordered locus">S3615</name>
</gene>
<organism>
    <name type="scientific">Shigella flexneri</name>
    <dbReference type="NCBI Taxonomy" id="623"/>
    <lineage>
        <taxon>Bacteria</taxon>
        <taxon>Pseudomonadati</taxon>
        <taxon>Pseudomonadota</taxon>
        <taxon>Gammaproteobacteria</taxon>
        <taxon>Enterobacterales</taxon>
        <taxon>Enterobacteriaceae</taxon>
        <taxon>Shigella</taxon>
    </lineage>
</organism>
<feature type="chain" id="PRO_0000058386" description="Protein YjdM">
    <location>
        <begin position="1"/>
        <end position="111"/>
    </location>
</feature>
<reference key="1">
    <citation type="journal article" date="2002" name="Nucleic Acids Res.">
        <title>Genome sequence of Shigella flexneri 2a: insights into pathogenicity through comparison with genomes of Escherichia coli K12 and O157.</title>
        <authorList>
            <person name="Jin Q."/>
            <person name="Yuan Z."/>
            <person name="Xu J."/>
            <person name="Wang Y."/>
            <person name="Shen Y."/>
            <person name="Lu W."/>
            <person name="Wang J."/>
            <person name="Liu H."/>
            <person name="Yang J."/>
            <person name="Yang F."/>
            <person name="Zhang X."/>
            <person name="Zhang J."/>
            <person name="Yang G."/>
            <person name="Wu H."/>
            <person name="Qu D."/>
            <person name="Dong J."/>
            <person name="Sun L."/>
            <person name="Xue Y."/>
            <person name="Zhao A."/>
            <person name="Gao Y."/>
            <person name="Zhu J."/>
            <person name="Kan B."/>
            <person name="Ding K."/>
            <person name="Chen S."/>
            <person name="Cheng H."/>
            <person name="Yao Z."/>
            <person name="He B."/>
            <person name="Chen R."/>
            <person name="Ma D."/>
            <person name="Qiang B."/>
            <person name="Wen Y."/>
            <person name="Hou Y."/>
            <person name="Yu J."/>
        </authorList>
    </citation>
    <scope>NUCLEOTIDE SEQUENCE [LARGE SCALE GENOMIC DNA]</scope>
    <source>
        <strain>301 / Serotype 2a</strain>
    </source>
</reference>
<reference key="2">
    <citation type="journal article" date="2003" name="Infect. Immun.">
        <title>Complete genome sequence and comparative genomics of Shigella flexneri serotype 2a strain 2457T.</title>
        <authorList>
            <person name="Wei J."/>
            <person name="Goldberg M.B."/>
            <person name="Burland V."/>
            <person name="Venkatesan M.M."/>
            <person name="Deng W."/>
            <person name="Fournier G."/>
            <person name="Mayhew G.F."/>
            <person name="Plunkett G. III"/>
            <person name="Rose D.J."/>
            <person name="Darling A."/>
            <person name="Mau B."/>
            <person name="Perna N.T."/>
            <person name="Payne S.M."/>
            <person name="Runyen-Janecky L.J."/>
            <person name="Zhou S."/>
            <person name="Schwartz D.C."/>
            <person name="Blattner F.R."/>
        </authorList>
    </citation>
    <scope>NUCLEOTIDE SEQUENCE [LARGE SCALE GENOMIC DNA]</scope>
    <source>
        <strain>ATCC 700930 / 2457T / Serotype 2a</strain>
    </source>
</reference>
<evidence type="ECO:0000305" key="1"/>
<proteinExistence type="inferred from homology"/>
<sequence>MSLPHCPKCNSEYTYEDNGMYICPECAYEWNDAEPAQESDELIVKDANGNLLADGDSVTIIKDLKVKGSSSMLKIGTKVKNIRLVEGDHNIDCKIDGFGPMKLKSEFVKKN</sequence>
<protein>
    <recommendedName>
        <fullName>Protein YjdM</fullName>
    </recommendedName>
</protein>
<comment type="similarity">
    <text evidence="1">Belongs to the YjdM family.</text>
</comment>